<reference key="1">
    <citation type="journal article" date="2008" name="Toxicon">
        <title>Molecular diversification based on analysis of expressed sequence tags from the venom glands of the Chinese bird spider Ornithoctonus huwena.</title>
        <authorList>
            <person name="Jiang L."/>
            <person name="Peng L."/>
            <person name="Chen J."/>
            <person name="Zhang Y."/>
            <person name="Xiong X."/>
            <person name="Liang S."/>
        </authorList>
    </citation>
    <scope>NUCLEOTIDE SEQUENCE [MRNA]</scope>
    <source>
        <tissue>Venom gland</tissue>
    </source>
</reference>
<reference key="2">
    <citation type="journal article" date="2018" name="Nat. Struct. Mol. Biol.">
        <title>Screening, large-scale production and structure-based classification of cystine-dense peptides.</title>
        <authorList>
            <person name="Correnti C.E."/>
            <person name="Gewe M.M."/>
            <person name="Mehlin C."/>
            <person name="Bandaranayake A.D."/>
            <person name="Johnsen W.A."/>
            <person name="Rupert P.B."/>
            <person name="Brusniak M.Y."/>
            <person name="Clarke M."/>
            <person name="Burke S.E."/>
            <person name="De Van Der Schueren W."/>
            <person name="Pilat K."/>
            <person name="Turnbaugh S.M."/>
            <person name="May D."/>
            <person name="Watson A."/>
            <person name="Chan M.K."/>
            <person name="Bahl C.D."/>
            <person name="Olson J.M."/>
            <person name="Strong R.K."/>
        </authorList>
    </citation>
    <scope>X-RAY CRYSTALLOGRAPHY (1.89 ANGSTROMS) OF 50-81</scope>
    <scope>FUNCTION</scope>
    <scope>SYNTHESIS OF 50-81</scope>
    <scope>DISULFIDE BONDS</scope>
</reference>
<feature type="signal peptide" evidence="2">
    <location>
        <begin position="1"/>
        <end position="21"/>
    </location>
</feature>
<feature type="propeptide" id="PRO_0000380174" evidence="5">
    <location>
        <begin position="22"/>
        <end position="49"/>
    </location>
</feature>
<feature type="chain" id="PRO_0000380175" description="U5-theraphotoxin-Hs1b 1" evidence="5">
    <location>
        <begin position="50"/>
        <end position="81"/>
    </location>
</feature>
<feature type="disulfide bond" evidence="7">
    <location>
        <begin position="51"/>
        <end position="63"/>
    </location>
</feature>
<feature type="disulfide bond" evidence="7">
    <location>
        <begin position="56"/>
        <end position="68"/>
    </location>
</feature>
<feature type="disulfide bond" evidence="7">
    <location>
        <begin position="62"/>
        <end position="75"/>
    </location>
</feature>
<feature type="strand" evidence="8">
    <location>
        <begin position="58"/>
        <end position="60"/>
    </location>
</feature>
<feature type="turn" evidence="8">
    <location>
        <begin position="70"/>
        <end position="72"/>
    </location>
</feature>
<feature type="strand" evidence="8">
    <location>
        <begin position="73"/>
        <end position="76"/>
    </location>
</feature>
<proteinExistence type="evidence at protein level"/>
<protein>
    <recommendedName>
        <fullName evidence="5">U5-theraphotoxin-Hs1b 1</fullName>
        <shortName evidence="5">U5-TRTX-Hs1b</shortName>
    </recommendedName>
    <alternativeName>
        <fullName evidence="4">Lectin SHL-Ib1</fullName>
    </alternativeName>
</protein>
<sequence>MKTSMFLTLTGLVLLFVVCYASESEEKEFPKELLSSIFAADSDFKEEERGCFGYKCDYYKGCCSGYVCSPTWKWCVRPGPGRR</sequence>
<evidence type="ECO:0000250" key="1">
    <source>
        <dbReference type="UniProtKB" id="Q86C51"/>
    </source>
</evidence>
<evidence type="ECO:0000255" key="2"/>
<evidence type="ECO:0000269" key="3">
    <source>
    </source>
</evidence>
<evidence type="ECO:0000303" key="4">
    <source>
    </source>
</evidence>
<evidence type="ECO:0000305" key="5"/>
<evidence type="ECO:0000305" key="6">
    <source>
    </source>
</evidence>
<evidence type="ECO:0000312" key="7">
    <source>
        <dbReference type="PDB" id="6AV8"/>
    </source>
</evidence>
<evidence type="ECO:0007829" key="8">
    <source>
        <dbReference type="PDB" id="6AV8"/>
    </source>
</evidence>
<dbReference type="EMBL" id="EU195270">
    <property type="protein sequence ID" value="ABY77723.1"/>
    <property type="molecule type" value="mRNA"/>
</dbReference>
<dbReference type="PDB" id="6AV8">
    <property type="method" value="X-ray"/>
    <property type="resolution" value="1.89 A"/>
    <property type="chains" value="A=50-82"/>
</dbReference>
<dbReference type="PDBsum" id="6AV8"/>
<dbReference type="SMR" id="B3FIS6"/>
<dbReference type="ArachnoServer" id="AS000698">
    <property type="toxin name" value="U5-theraphotoxin-Hs1b"/>
</dbReference>
<dbReference type="GO" id="GO:0005576">
    <property type="term" value="C:extracellular region"/>
    <property type="evidence" value="ECO:0007669"/>
    <property type="project" value="UniProtKB-SubCell"/>
</dbReference>
<dbReference type="GO" id="GO:0030246">
    <property type="term" value="F:carbohydrate binding"/>
    <property type="evidence" value="ECO:0007669"/>
    <property type="project" value="UniProtKB-KW"/>
</dbReference>
<dbReference type="GO" id="GO:0008200">
    <property type="term" value="F:ion channel inhibitor activity"/>
    <property type="evidence" value="ECO:0007669"/>
    <property type="project" value="InterPro"/>
</dbReference>
<dbReference type="GO" id="GO:0015459">
    <property type="term" value="F:potassium channel regulator activity"/>
    <property type="evidence" value="ECO:0007669"/>
    <property type="project" value="UniProtKB-KW"/>
</dbReference>
<dbReference type="GO" id="GO:0090729">
    <property type="term" value="F:toxin activity"/>
    <property type="evidence" value="ECO:0007669"/>
    <property type="project" value="UniProtKB-KW"/>
</dbReference>
<dbReference type="InterPro" id="IPR011696">
    <property type="entry name" value="Huwentoxin-1"/>
</dbReference>
<dbReference type="Pfam" id="PF07740">
    <property type="entry name" value="Toxin_12"/>
    <property type="match status" value="1"/>
</dbReference>
<dbReference type="SUPFAM" id="SSF57059">
    <property type="entry name" value="omega toxin-like"/>
    <property type="match status" value="1"/>
</dbReference>
<organism>
    <name type="scientific">Cyriopagopus schmidti</name>
    <name type="common">Chinese bird spider</name>
    <name type="synonym">Haplopelma schmidti</name>
    <dbReference type="NCBI Taxonomy" id="29017"/>
    <lineage>
        <taxon>Eukaryota</taxon>
        <taxon>Metazoa</taxon>
        <taxon>Ecdysozoa</taxon>
        <taxon>Arthropoda</taxon>
        <taxon>Chelicerata</taxon>
        <taxon>Arachnida</taxon>
        <taxon>Araneae</taxon>
        <taxon>Mygalomorphae</taxon>
        <taxon>Theraphosidae</taxon>
        <taxon>Cyriopagopus</taxon>
    </lineage>
</organism>
<accession>B3FIS6</accession>
<comment type="function">
    <text evidence="1 3">Weakly inhibits 5HT3A receptors and Kv1.3/KCNA3 voltage-gated potassium channels (PubMed:29483648). Agglutinates erythrocytes (By similarity).</text>
</comment>
<comment type="subcellular location">
    <subcellularLocation>
        <location evidence="6">Secreted</location>
    </subcellularLocation>
</comment>
<comment type="tissue specificity">
    <text evidence="6">Expressed by the venom gland.</text>
</comment>
<comment type="domain">
    <text>The presence of a 'disulfide through disulfide knot' structurally defines this protein as a knottin.</text>
</comment>
<comment type="similarity">
    <text evidence="5">Belongs to the neurotoxin 10 (Hwtx-1) family. 51 (Hntx-8) subfamily. Hntx-8 sub-subfamily.</text>
</comment>
<keyword id="KW-0002">3D-structure</keyword>
<keyword id="KW-0165">Cleavage on pair of basic residues</keyword>
<keyword id="KW-1015">Disulfide bond</keyword>
<keyword id="KW-0872">Ion channel impairing toxin</keyword>
<keyword id="KW-0960">Knottin</keyword>
<keyword id="KW-0430">Lectin</keyword>
<keyword id="KW-0632">Potassium channel impairing toxin</keyword>
<keyword id="KW-0964">Secreted</keyword>
<keyword id="KW-0732">Signal</keyword>
<keyword id="KW-0800">Toxin</keyword>
<keyword id="KW-1220">Voltage-gated potassium channel impairing toxin</keyword>
<name>TXLB1_CYRSC</name>